<sequence length="242" mass="26566">MLLGVNIDHIATVRNARGTTYPSPVEAALVAETHGADLITMHLREDRRHIKDADVFAVKNAIRTRLNLEMALTEEMLENALKVMPEDVCIVPEKRQEITTEGGLDVLAQQEKIAGFTKILTDAGIRVSLFIDADDRQIQAARDVGAPVVELHTGAYADARSHAEQIRQFERIQNGAHFAGDLGLVVNAGHGLTIHNVTPIAQILAIRELNIGHSLIAQALFLGLPEAVRQMKEAMFRARLLP</sequence>
<comment type="function">
    <text evidence="1">Catalyzes the complicated ring closure reaction between the two acyclic compounds 1-deoxy-D-xylulose-5-phosphate (DXP) and 3-amino-2-oxopropyl phosphate (1-amino-acetone-3-phosphate or AAP) to form pyridoxine 5'-phosphate (PNP) and inorganic phosphate.</text>
</comment>
<comment type="catalytic activity">
    <reaction evidence="1">
        <text>3-amino-2-oxopropyl phosphate + 1-deoxy-D-xylulose 5-phosphate = pyridoxine 5'-phosphate + phosphate + 2 H2O + H(+)</text>
        <dbReference type="Rhea" id="RHEA:15265"/>
        <dbReference type="ChEBI" id="CHEBI:15377"/>
        <dbReference type="ChEBI" id="CHEBI:15378"/>
        <dbReference type="ChEBI" id="CHEBI:43474"/>
        <dbReference type="ChEBI" id="CHEBI:57279"/>
        <dbReference type="ChEBI" id="CHEBI:57792"/>
        <dbReference type="ChEBI" id="CHEBI:58589"/>
        <dbReference type="EC" id="2.6.99.2"/>
    </reaction>
</comment>
<comment type="pathway">
    <text evidence="1">Cofactor biosynthesis; pyridoxine 5'-phosphate biosynthesis; pyridoxine 5'-phosphate from D-erythrose 4-phosphate: step 5/5.</text>
</comment>
<comment type="subunit">
    <text evidence="1">Homooctamer; tetramer of dimers.</text>
</comment>
<comment type="subcellular location">
    <subcellularLocation>
        <location evidence="1">Cytoplasm</location>
    </subcellularLocation>
</comment>
<comment type="similarity">
    <text evidence="1">Belongs to the PNP synthase family.</text>
</comment>
<proteinExistence type="inferred from homology"/>
<dbReference type="EC" id="2.6.99.2" evidence="1"/>
<dbReference type="EMBL" id="AE002098">
    <property type="protein sequence ID" value="AAF40885.1"/>
    <property type="molecule type" value="Genomic_DNA"/>
</dbReference>
<dbReference type="PIR" id="B81197">
    <property type="entry name" value="B81197"/>
</dbReference>
<dbReference type="RefSeq" id="NP_273495.1">
    <property type="nucleotide sequence ID" value="NC_003112.2"/>
</dbReference>
<dbReference type="RefSeq" id="WP_002224937.1">
    <property type="nucleotide sequence ID" value="NC_003112.2"/>
</dbReference>
<dbReference type="SMR" id="Q9K0V9"/>
<dbReference type="FunCoup" id="Q9K0V9">
    <property type="interactions" value="335"/>
</dbReference>
<dbReference type="STRING" id="122586.NMB0448"/>
<dbReference type="PaxDb" id="122586-NMB0448"/>
<dbReference type="KEGG" id="nme:NMB0448"/>
<dbReference type="PATRIC" id="fig|122586.8.peg.570"/>
<dbReference type="HOGENOM" id="CLU_074563_0_0_4"/>
<dbReference type="InParanoid" id="Q9K0V9"/>
<dbReference type="OrthoDB" id="9806590at2"/>
<dbReference type="UniPathway" id="UPA00244">
    <property type="reaction ID" value="UER00313"/>
</dbReference>
<dbReference type="Proteomes" id="UP000000425">
    <property type="component" value="Chromosome"/>
</dbReference>
<dbReference type="GO" id="GO:0005829">
    <property type="term" value="C:cytosol"/>
    <property type="evidence" value="ECO:0000318"/>
    <property type="project" value="GO_Central"/>
</dbReference>
<dbReference type="GO" id="GO:0033856">
    <property type="term" value="F:pyridoxine 5'-phosphate synthase activity"/>
    <property type="evidence" value="ECO:0000318"/>
    <property type="project" value="GO_Central"/>
</dbReference>
<dbReference type="GO" id="GO:0008615">
    <property type="term" value="P:pyridoxine biosynthetic process"/>
    <property type="evidence" value="ECO:0000318"/>
    <property type="project" value="GO_Central"/>
</dbReference>
<dbReference type="CDD" id="cd00003">
    <property type="entry name" value="PNPsynthase"/>
    <property type="match status" value="1"/>
</dbReference>
<dbReference type="FunFam" id="3.20.20.70:FF:000247">
    <property type="entry name" value="Pyridoxine 5'-phosphate synthase"/>
    <property type="match status" value="1"/>
</dbReference>
<dbReference type="Gene3D" id="3.20.20.70">
    <property type="entry name" value="Aldolase class I"/>
    <property type="match status" value="1"/>
</dbReference>
<dbReference type="HAMAP" id="MF_00279">
    <property type="entry name" value="PdxJ"/>
    <property type="match status" value="1"/>
</dbReference>
<dbReference type="InterPro" id="IPR013785">
    <property type="entry name" value="Aldolase_TIM"/>
</dbReference>
<dbReference type="InterPro" id="IPR004569">
    <property type="entry name" value="PyrdxlP_synth_PdxJ"/>
</dbReference>
<dbReference type="InterPro" id="IPR036130">
    <property type="entry name" value="Pyridoxine-5'_phos_synth"/>
</dbReference>
<dbReference type="NCBIfam" id="TIGR00559">
    <property type="entry name" value="pdxJ"/>
    <property type="match status" value="1"/>
</dbReference>
<dbReference type="NCBIfam" id="NF003623">
    <property type="entry name" value="PRK05265.1-1"/>
    <property type="match status" value="1"/>
</dbReference>
<dbReference type="NCBIfam" id="NF003625">
    <property type="entry name" value="PRK05265.1-3"/>
    <property type="match status" value="1"/>
</dbReference>
<dbReference type="NCBIfam" id="NF003627">
    <property type="entry name" value="PRK05265.1-5"/>
    <property type="match status" value="1"/>
</dbReference>
<dbReference type="PANTHER" id="PTHR30456">
    <property type="entry name" value="PYRIDOXINE 5'-PHOSPHATE SYNTHASE"/>
    <property type="match status" value="1"/>
</dbReference>
<dbReference type="PANTHER" id="PTHR30456:SF0">
    <property type="entry name" value="PYRIDOXINE 5'-PHOSPHATE SYNTHASE"/>
    <property type="match status" value="1"/>
</dbReference>
<dbReference type="Pfam" id="PF03740">
    <property type="entry name" value="PdxJ"/>
    <property type="match status" value="1"/>
</dbReference>
<dbReference type="SUPFAM" id="SSF63892">
    <property type="entry name" value="Pyridoxine 5'-phosphate synthase"/>
    <property type="match status" value="1"/>
</dbReference>
<protein>
    <recommendedName>
        <fullName evidence="1">Pyridoxine 5'-phosphate synthase</fullName>
        <shortName evidence="1">PNP synthase</shortName>
        <ecNumber evidence="1">2.6.99.2</ecNumber>
    </recommendedName>
</protein>
<accession>Q9K0V9</accession>
<organism>
    <name type="scientific">Neisseria meningitidis serogroup B (strain ATCC BAA-335 / MC58)</name>
    <dbReference type="NCBI Taxonomy" id="122586"/>
    <lineage>
        <taxon>Bacteria</taxon>
        <taxon>Pseudomonadati</taxon>
        <taxon>Pseudomonadota</taxon>
        <taxon>Betaproteobacteria</taxon>
        <taxon>Neisseriales</taxon>
        <taxon>Neisseriaceae</taxon>
        <taxon>Neisseria</taxon>
    </lineage>
</organism>
<name>PDXJ_NEIMB</name>
<evidence type="ECO:0000255" key="1">
    <source>
        <dbReference type="HAMAP-Rule" id="MF_00279"/>
    </source>
</evidence>
<keyword id="KW-0963">Cytoplasm</keyword>
<keyword id="KW-0664">Pyridoxine biosynthesis</keyword>
<keyword id="KW-1185">Reference proteome</keyword>
<keyword id="KW-0808">Transferase</keyword>
<feature type="chain" id="PRO_0000190120" description="Pyridoxine 5'-phosphate synthase">
    <location>
        <begin position="1"/>
        <end position="242"/>
    </location>
</feature>
<feature type="active site" description="Proton acceptor" evidence="1">
    <location>
        <position position="42"/>
    </location>
</feature>
<feature type="active site" description="Proton acceptor" evidence="1">
    <location>
        <position position="69"/>
    </location>
</feature>
<feature type="active site" description="Proton donor" evidence="1">
    <location>
        <position position="190"/>
    </location>
</feature>
<feature type="binding site" evidence="1">
    <location>
        <position position="6"/>
    </location>
    <ligand>
        <name>3-amino-2-oxopropyl phosphate</name>
        <dbReference type="ChEBI" id="CHEBI:57279"/>
    </ligand>
</feature>
<feature type="binding site" evidence="1">
    <location>
        <begin position="8"/>
        <end position="9"/>
    </location>
    <ligand>
        <name>1-deoxy-D-xylulose 5-phosphate</name>
        <dbReference type="ChEBI" id="CHEBI:57792"/>
    </ligand>
</feature>
<feature type="binding site" evidence="1">
    <location>
        <position position="17"/>
    </location>
    <ligand>
        <name>3-amino-2-oxopropyl phosphate</name>
        <dbReference type="ChEBI" id="CHEBI:57279"/>
    </ligand>
</feature>
<feature type="binding site" evidence="1">
    <location>
        <position position="44"/>
    </location>
    <ligand>
        <name>1-deoxy-D-xylulose 5-phosphate</name>
        <dbReference type="ChEBI" id="CHEBI:57792"/>
    </ligand>
</feature>
<feature type="binding site" evidence="1">
    <location>
        <position position="49"/>
    </location>
    <ligand>
        <name>1-deoxy-D-xylulose 5-phosphate</name>
        <dbReference type="ChEBI" id="CHEBI:57792"/>
    </ligand>
</feature>
<feature type="binding site" evidence="1">
    <location>
        <position position="99"/>
    </location>
    <ligand>
        <name>1-deoxy-D-xylulose 5-phosphate</name>
        <dbReference type="ChEBI" id="CHEBI:57792"/>
    </ligand>
</feature>
<feature type="binding site" evidence="1">
    <location>
        <position position="191"/>
    </location>
    <ligand>
        <name>3-amino-2-oxopropyl phosphate</name>
        <dbReference type="ChEBI" id="CHEBI:57279"/>
    </ligand>
</feature>
<feature type="binding site" evidence="1">
    <location>
        <begin position="212"/>
        <end position="213"/>
    </location>
    <ligand>
        <name>3-amino-2-oxopropyl phosphate</name>
        <dbReference type="ChEBI" id="CHEBI:57279"/>
    </ligand>
</feature>
<feature type="site" description="Transition state stabilizer" evidence="1">
    <location>
        <position position="150"/>
    </location>
</feature>
<reference key="1">
    <citation type="journal article" date="2000" name="Science">
        <title>Complete genome sequence of Neisseria meningitidis serogroup B strain MC58.</title>
        <authorList>
            <person name="Tettelin H."/>
            <person name="Saunders N.J."/>
            <person name="Heidelberg J.F."/>
            <person name="Jeffries A.C."/>
            <person name="Nelson K.E."/>
            <person name="Eisen J.A."/>
            <person name="Ketchum K.A."/>
            <person name="Hood D.W."/>
            <person name="Peden J.F."/>
            <person name="Dodson R.J."/>
            <person name="Nelson W.C."/>
            <person name="Gwinn M.L."/>
            <person name="DeBoy R.T."/>
            <person name="Peterson J.D."/>
            <person name="Hickey E.K."/>
            <person name="Haft D.H."/>
            <person name="Salzberg S.L."/>
            <person name="White O."/>
            <person name="Fleischmann R.D."/>
            <person name="Dougherty B.A."/>
            <person name="Mason T.M."/>
            <person name="Ciecko A."/>
            <person name="Parksey D.S."/>
            <person name="Blair E."/>
            <person name="Cittone H."/>
            <person name="Clark E.B."/>
            <person name="Cotton M.D."/>
            <person name="Utterback T.R."/>
            <person name="Khouri H.M."/>
            <person name="Qin H."/>
            <person name="Vamathevan J.J."/>
            <person name="Gill J."/>
            <person name="Scarlato V."/>
            <person name="Masignani V."/>
            <person name="Pizza M."/>
            <person name="Grandi G."/>
            <person name="Sun L."/>
            <person name="Smith H.O."/>
            <person name="Fraser C.M."/>
            <person name="Moxon E.R."/>
            <person name="Rappuoli R."/>
            <person name="Venter J.C."/>
        </authorList>
    </citation>
    <scope>NUCLEOTIDE SEQUENCE [LARGE SCALE GENOMIC DNA]</scope>
    <source>
        <strain>ATCC BAA-335 / MC58</strain>
    </source>
</reference>
<gene>
    <name evidence="1" type="primary">pdxJ</name>
    <name type="ordered locus">NMB0448</name>
</gene>